<keyword id="KW-1185">Reference proteome</keyword>
<keyword id="KW-0677">Repeat</keyword>
<reference key="1">
    <citation type="journal article" date="2000" name="Nature">
        <title>Sequence and analysis of chromosome 3 of the plant Arabidopsis thaliana.</title>
        <authorList>
            <person name="Salanoubat M."/>
            <person name="Lemcke K."/>
            <person name="Rieger M."/>
            <person name="Ansorge W."/>
            <person name="Unseld M."/>
            <person name="Fartmann B."/>
            <person name="Valle G."/>
            <person name="Bloecker H."/>
            <person name="Perez-Alonso M."/>
            <person name="Obermaier B."/>
            <person name="Delseny M."/>
            <person name="Boutry M."/>
            <person name="Grivell L.A."/>
            <person name="Mache R."/>
            <person name="Puigdomenech P."/>
            <person name="De Simone V."/>
            <person name="Choisne N."/>
            <person name="Artiguenave F."/>
            <person name="Robert C."/>
            <person name="Brottier P."/>
            <person name="Wincker P."/>
            <person name="Cattolico L."/>
            <person name="Weissenbach J."/>
            <person name="Saurin W."/>
            <person name="Quetier F."/>
            <person name="Schaefer M."/>
            <person name="Mueller-Auer S."/>
            <person name="Gabel C."/>
            <person name="Fuchs M."/>
            <person name="Benes V."/>
            <person name="Wurmbach E."/>
            <person name="Drzonek H."/>
            <person name="Erfle H."/>
            <person name="Jordan N."/>
            <person name="Bangert S."/>
            <person name="Wiedelmann R."/>
            <person name="Kranz H."/>
            <person name="Voss H."/>
            <person name="Holland R."/>
            <person name="Brandt P."/>
            <person name="Nyakatura G."/>
            <person name="Vezzi A."/>
            <person name="D'Angelo M."/>
            <person name="Pallavicini A."/>
            <person name="Toppo S."/>
            <person name="Simionati B."/>
            <person name="Conrad A."/>
            <person name="Hornischer K."/>
            <person name="Kauer G."/>
            <person name="Loehnert T.-H."/>
            <person name="Nordsiek G."/>
            <person name="Reichelt J."/>
            <person name="Scharfe M."/>
            <person name="Schoen O."/>
            <person name="Bargues M."/>
            <person name="Terol J."/>
            <person name="Climent J."/>
            <person name="Navarro P."/>
            <person name="Collado C."/>
            <person name="Perez-Perez A."/>
            <person name="Ottenwaelder B."/>
            <person name="Duchemin D."/>
            <person name="Cooke R."/>
            <person name="Laudie M."/>
            <person name="Berger-Llauro C."/>
            <person name="Purnelle B."/>
            <person name="Masuy D."/>
            <person name="de Haan M."/>
            <person name="Maarse A.C."/>
            <person name="Alcaraz J.-P."/>
            <person name="Cottet A."/>
            <person name="Casacuberta E."/>
            <person name="Monfort A."/>
            <person name="Argiriou A."/>
            <person name="Flores M."/>
            <person name="Liguori R."/>
            <person name="Vitale D."/>
            <person name="Mannhaupt G."/>
            <person name="Haase D."/>
            <person name="Schoof H."/>
            <person name="Rudd S."/>
            <person name="Zaccaria P."/>
            <person name="Mewes H.-W."/>
            <person name="Mayer K.F.X."/>
            <person name="Kaul S."/>
            <person name="Town C.D."/>
            <person name="Koo H.L."/>
            <person name="Tallon L.J."/>
            <person name="Jenkins J."/>
            <person name="Rooney T."/>
            <person name="Rizzo M."/>
            <person name="Walts A."/>
            <person name="Utterback T."/>
            <person name="Fujii C.Y."/>
            <person name="Shea T.P."/>
            <person name="Creasy T.H."/>
            <person name="Haas B."/>
            <person name="Maiti R."/>
            <person name="Wu D."/>
            <person name="Peterson J."/>
            <person name="Van Aken S."/>
            <person name="Pai G."/>
            <person name="Militscher J."/>
            <person name="Sellers P."/>
            <person name="Gill J.E."/>
            <person name="Feldblyum T.V."/>
            <person name="Preuss D."/>
            <person name="Lin X."/>
            <person name="Nierman W.C."/>
            <person name="Salzberg S.L."/>
            <person name="White O."/>
            <person name="Venter J.C."/>
            <person name="Fraser C.M."/>
            <person name="Kaneko T."/>
            <person name="Nakamura Y."/>
            <person name="Sato S."/>
            <person name="Kato T."/>
            <person name="Asamizu E."/>
            <person name="Sasamoto S."/>
            <person name="Kimura T."/>
            <person name="Idesawa K."/>
            <person name="Kawashima K."/>
            <person name="Kishida Y."/>
            <person name="Kiyokawa C."/>
            <person name="Kohara M."/>
            <person name="Matsumoto M."/>
            <person name="Matsuno A."/>
            <person name="Muraki A."/>
            <person name="Nakayama S."/>
            <person name="Nakazaki N."/>
            <person name="Shinpo S."/>
            <person name="Takeuchi C."/>
            <person name="Wada T."/>
            <person name="Watanabe A."/>
            <person name="Yamada M."/>
            <person name="Yasuda M."/>
            <person name="Tabata S."/>
        </authorList>
    </citation>
    <scope>NUCLEOTIDE SEQUENCE [LARGE SCALE GENOMIC DNA]</scope>
    <source>
        <strain>cv. Columbia</strain>
    </source>
</reference>
<reference key="2">
    <citation type="journal article" date="2017" name="Plant J.">
        <title>Araport11: a complete reannotation of the Arabidopsis thaliana reference genome.</title>
        <authorList>
            <person name="Cheng C.Y."/>
            <person name="Krishnakumar V."/>
            <person name="Chan A.P."/>
            <person name="Thibaud-Nissen F."/>
            <person name="Schobel S."/>
            <person name="Town C.D."/>
        </authorList>
    </citation>
    <scope>GENOME REANNOTATION</scope>
    <source>
        <strain>cv. Columbia</strain>
    </source>
</reference>
<reference key="3">
    <citation type="submission" date="2004-09" db="EMBL/GenBank/DDBJ databases">
        <title>Large-scale analysis of RIKEN Arabidopsis full-length (RAFL) cDNAs.</title>
        <authorList>
            <person name="Totoki Y."/>
            <person name="Seki M."/>
            <person name="Ishida J."/>
            <person name="Nakajima M."/>
            <person name="Enju A."/>
            <person name="Kamiya A."/>
            <person name="Narusaka M."/>
            <person name="Shin-i T."/>
            <person name="Nakagawa M."/>
            <person name="Sakamoto N."/>
            <person name="Oishi K."/>
            <person name="Kohara Y."/>
            <person name="Kobayashi M."/>
            <person name="Toyoda A."/>
            <person name="Sakaki Y."/>
            <person name="Sakurai T."/>
            <person name="Iida K."/>
            <person name="Akiyama K."/>
            <person name="Satou M."/>
            <person name="Toyoda T."/>
            <person name="Konagaya A."/>
            <person name="Carninci P."/>
            <person name="Kawai J."/>
            <person name="Hayashizaki Y."/>
            <person name="Shinozaki K."/>
        </authorList>
    </citation>
    <scope>NUCLEOTIDE SEQUENCE [LARGE SCALE MRNA]</scope>
    <source>
        <strain>cv. Columbia</strain>
    </source>
</reference>
<reference key="4">
    <citation type="journal article" date="2004" name="Plant Cell">
        <title>Genome-wide analysis of Arabidopsis pentatricopeptide repeat proteins reveals their essential role in organelle biogenesis.</title>
        <authorList>
            <person name="Lurin C."/>
            <person name="Andres C."/>
            <person name="Aubourg S."/>
            <person name="Bellaoui M."/>
            <person name="Bitton F."/>
            <person name="Bruyere C."/>
            <person name="Caboche M."/>
            <person name="Debast C."/>
            <person name="Gualberto J."/>
            <person name="Hoffmann B."/>
            <person name="Lecharny A."/>
            <person name="Le Ret M."/>
            <person name="Martin-Magniette M.-L."/>
            <person name="Mireau H."/>
            <person name="Peeters N."/>
            <person name="Renou J.-P."/>
            <person name="Szurek B."/>
            <person name="Taconnat L."/>
            <person name="Small I."/>
        </authorList>
    </citation>
    <scope>GENE FAMILY</scope>
</reference>
<name>PP295_ARATH</name>
<protein>
    <recommendedName>
        <fullName>Pentatricopeptide repeat-containing protein At3g62890</fullName>
    </recommendedName>
</protein>
<dbReference type="EMBL" id="AL162651">
    <property type="protein sequence ID" value="CAB83139.1"/>
    <property type="status" value="ALT_SEQ"/>
    <property type="molecule type" value="Genomic_DNA"/>
</dbReference>
<dbReference type="EMBL" id="CP002686">
    <property type="protein sequence ID" value="AEE80407.1"/>
    <property type="molecule type" value="Genomic_DNA"/>
</dbReference>
<dbReference type="EMBL" id="AK175128">
    <property type="protein sequence ID" value="BAD42891.1"/>
    <property type="molecule type" value="mRNA"/>
</dbReference>
<dbReference type="PIR" id="T48078">
    <property type="entry name" value="T48078"/>
</dbReference>
<dbReference type="RefSeq" id="NP_191848.2">
    <property type="nucleotide sequence ID" value="NM_116154.4"/>
</dbReference>
<dbReference type="SMR" id="Q683I9"/>
<dbReference type="FunCoup" id="Q683I9">
    <property type="interactions" value="35"/>
</dbReference>
<dbReference type="STRING" id="3702.Q683I9"/>
<dbReference type="iPTMnet" id="Q683I9"/>
<dbReference type="PaxDb" id="3702-AT3G62890.1"/>
<dbReference type="ProteomicsDB" id="249202"/>
<dbReference type="EnsemblPlants" id="AT3G62890.1">
    <property type="protein sequence ID" value="AT3G62890.1"/>
    <property type="gene ID" value="AT3G62890"/>
</dbReference>
<dbReference type="GeneID" id="825464"/>
<dbReference type="Gramene" id="AT3G62890.1">
    <property type="protein sequence ID" value="AT3G62890.1"/>
    <property type="gene ID" value="AT3G62890"/>
</dbReference>
<dbReference type="KEGG" id="ath:AT3G62890"/>
<dbReference type="Araport" id="AT3G62890"/>
<dbReference type="TAIR" id="AT3G62890"/>
<dbReference type="eggNOG" id="KOG4197">
    <property type="taxonomic scope" value="Eukaryota"/>
</dbReference>
<dbReference type="HOGENOM" id="CLU_002706_37_2_1"/>
<dbReference type="InParanoid" id="Q683I9"/>
<dbReference type="OMA" id="RMRFHGV"/>
<dbReference type="PhylomeDB" id="Q683I9"/>
<dbReference type="PRO" id="PR:Q683I9"/>
<dbReference type="Proteomes" id="UP000006548">
    <property type="component" value="Chromosome 3"/>
</dbReference>
<dbReference type="ExpressionAtlas" id="Q683I9">
    <property type="expression patterns" value="baseline and differential"/>
</dbReference>
<dbReference type="GO" id="GO:0003723">
    <property type="term" value="F:RNA binding"/>
    <property type="evidence" value="ECO:0007669"/>
    <property type="project" value="InterPro"/>
</dbReference>
<dbReference type="GO" id="GO:0008270">
    <property type="term" value="F:zinc ion binding"/>
    <property type="evidence" value="ECO:0007669"/>
    <property type="project" value="InterPro"/>
</dbReference>
<dbReference type="GO" id="GO:0009451">
    <property type="term" value="P:RNA modification"/>
    <property type="evidence" value="ECO:0007669"/>
    <property type="project" value="InterPro"/>
</dbReference>
<dbReference type="FunFam" id="1.25.40.10:FF:000348">
    <property type="entry name" value="Pentatricopeptide repeat-containing protein chloroplastic"/>
    <property type="match status" value="1"/>
</dbReference>
<dbReference type="FunFam" id="1.25.40.10:FF:000184">
    <property type="entry name" value="Pentatricopeptide repeat-containing protein, chloroplastic"/>
    <property type="match status" value="1"/>
</dbReference>
<dbReference type="Gene3D" id="1.25.40.10">
    <property type="entry name" value="Tetratricopeptide repeat domain"/>
    <property type="match status" value="3"/>
</dbReference>
<dbReference type="InterPro" id="IPR032867">
    <property type="entry name" value="DYW_dom"/>
</dbReference>
<dbReference type="InterPro" id="IPR046848">
    <property type="entry name" value="E_motif"/>
</dbReference>
<dbReference type="InterPro" id="IPR002885">
    <property type="entry name" value="Pentatricopeptide_rpt"/>
</dbReference>
<dbReference type="InterPro" id="IPR046960">
    <property type="entry name" value="PPR_At4g14850-like_plant"/>
</dbReference>
<dbReference type="InterPro" id="IPR011990">
    <property type="entry name" value="TPR-like_helical_dom_sf"/>
</dbReference>
<dbReference type="NCBIfam" id="TIGR00756">
    <property type="entry name" value="PPR"/>
    <property type="match status" value="4"/>
</dbReference>
<dbReference type="PANTHER" id="PTHR47926">
    <property type="entry name" value="PENTATRICOPEPTIDE REPEAT-CONTAINING PROTEIN"/>
    <property type="match status" value="1"/>
</dbReference>
<dbReference type="PANTHER" id="PTHR47926:SF436">
    <property type="entry name" value="PENTATRICOPEPTIDE REPEAT-CONTAINING PROTEIN ELI1, CHLOROPLASTIC-LIKE ISOFORM X2"/>
    <property type="match status" value="1"/>
</dbReference>
<dbReference type="Pfam" id="PF14432">
    <property type="entry name" value="DYW_deaminase"/>
    <property type="match status" value="1"/>
</dbReference>
<dbReference type="Pfam" id="PF20431">
    <property type="entry name" value="E_motif"/>
    <property type="match status" value="1"/>
</dbReference>
<dbReference type="Pfam" id="PF01535">
    <property type="entry name" value="PPR"/>
    <property type="match status" value="5"/>
</dbReference>
<dbReference type="Pfam" id="PF12854">
    <property type="entry name" value="PPR_1"/>
    <property type="match status" value="1"/>
</dbReference>
<dbReference type="Pfam" id="PF13041">
    <property type="entry name" value="PPR_2"/>
    <property type="match status" value="1"/>
</dbReference>
<dbReference type="SUPFAM" id="SSF48452">
    <property type="entry name" value="TPR-like"/>
    <property type="match status" value="1"/>
</dbReference>
<dbReference type="PROSITE" id="PS51375">
    <property type="entry name" value="PPR"/>
    <property type="match status" value="10"/>
</dbReference>
<comment type="similarity">
    <text evidence="1">Belongs to the PPR family. PCMP-H subfamily.</text>
</comment>
<comment type="sequence caution" evidence="1">
    <conflict type="erroneous gene model prediction">
        <sequence resource="EMBL-CDS" id="CAB83139"/>
    </conflict>
</comment>
<comment type="online information" name="Pentatricopeptide repeat proteins">
    <link uri="https://ppr.plantenergy.uwa.edu.au"/>
</comment>
<proteinExistence type="evidence at transcript level"/>
<sequence>MSKGAAIIAYANPIFHIRHLKLESFLWNIIIRAIVHNVSSPQRHSPISVYLRMRNHRVSPDFHTFPFLLPSFHNPLHLPLGQRTHAQILLFGLDKDPFVRTSLLNMYSSCGDLRSAQRVFDDSGSKDLPAWNSVVNAYAKAGLIDDARKLFDEMPERNVISWSCLINGYVMCGKYKEALDLFREMQLPKPNEAFVRPNEFTMSTVLSACGRLGALEQGKWVHAYIDKYHVEIDIVLGTALIDMYAKCGSLERAKRVFNALGSKKDVKAYSAMICCLAMYGLTDECFQLFSEMTTSDNINPNSVTFVGILGACVHRGLINEGKSYFKMMIEEFGITPSIQHYGCMVDLYGRSGLIKEAESFIASMPMEPDVLIWGSLLSGSRMLGDIKTCEGALKRLIELDPMNSGAYVLLSNVYAKTGRWMEVKCIRHEMEVKGINKVPGCSYVEVEGVVHEFVVGDESQQESERIYAMLDEIMQRLREAGYVTDTKEVLLDLNEKDKEIALSYHSEKLAIAFCLMKTRPGTPVRIIKNLRICGDCHLVMKMISKLFSREIVVRDCNRFHHFRDGSCSCRDFW</sequence>
<evidence type="ECO:0000305" key="1"/>
<feature type="chain" id="PRO_0000356154" description="Pentatricopeptide repeat-containing protein At3g62890">
    <location>
        <begin position="1"/>
        <end position="573"/>
    </location>
</feature>
<feature type="repeat" description="PPR 1">
    <location>
        <begin position="23"/>
        <end position="60"/>
    </location>
</feature>
<feature type="repeat" description="PPR 2">
    <location>
        <begin position="61"/>
        <end position="95"/>
    </location>
</feature>
<feature type="repeat" description="PPR 3">
    <location>
        <begin position="96"/>
        <end position="126"/>
    </location>
</feature>
<feature type="repeat" description="PPR 4">
    <location>
        <begin position="127"/>
        <end position="161"/>
    </location>
</feature>
<feature type="repeat" description="PPR 5">
    <location>
        <begin position="162"/>
        <end position="188"/>
    </location>
</feature>
<feature type="repeat" description="PPR 6">
    <location>
        <begin position="198"/>
        <end position="232"/>
    </location>
</feature>
<feature type="repeat" description="PPR 7">
    <location>
        <begin position="233"/>
        <end position="263"/>
    </location>
</feature>
<feature type="repeat" description="PPR 8">
    <location>
        <begin position="265"/>
        <end position="295"/>
    </location>
</feature>
<feature type="repeat" description="PPR 9">
    <location>
        <begin position="301"/>
        <end position="336"/>
    </location>
</feature>
<feature type="repeat" description="PPR 10">
    <location>
        <begin position="337"/>
        <end position="367"/>
    </location>
</feature>
<feature type="region of interest" description="Type E motif; degenerate">
    <location>
        <begin position="372"/>
        <end position="447"/>
    </location>
</feature>
<feature type="region of interest" description="Type E(+) motif">
    <location>
        <begin position="448"/>
        <end position="478"/>
    </location>
</feature>
<feature type="region of interest" description="Type DYW motif">
    <location>
        <begin position="479"/>
        <end position="573"/>
    </location>
</feature>
<gene>
    <name type="primary">PCMP-H82</name>
    <name type="ordered locus">At3g62890</name>
    <name type="ORF">F26K9_320</name>
</gene>
<accession>Q683I9</accession>
<accession>Q9LZH7</accession>
<organism>
    <name type="scientific">Arabidopsis thaliana</name>
    <name type="common">Mouse-ear cress</name>
    <dbReference type="NCBI Taxonomy" id="3702"/>
    <lineage>
        <taxon>Eukaryota</taxon>
        <taxon>Viridiplantae</taxon>
        <taxon>Streptophyta</taxon>
        <taxon>Embryophyta</taxon>
        <taxon>Tracheophyta</taxon>
        <taxon>Spermatophyta</taxon>
        <taxon>Magnoliopsida</taxon>
        <taxon>eudicotyledons</taxon>
        <taxon>Gunneridae</taxon>
        <taxon>Pentapetalae</taxon>
        <taxon>rosids</taxon>
        <taxon>malvids</taxon>
        <taxon>Brassicales</taxon>
        <taxon>Brassicaceae</taxon>
        <taxon>Camelineae</taxon>
        <taxon>Arabidopsis</taxon>
    </lineage>
</organism>